<reference evidence="5 6" key="1">
    <citation type="journal article" date="2005" name="J. Biol. Chem.">
        <title>Discovery, structural determination, and putative processing of the precursor protein that produces the cyclic trypsin inhibitor sunflower trypsin inhibitor 1.</title>
        <authorList>
            <person name="Mulvenna J.P."/>
            <person name="Foley F.M."/>
            <person name="Craik D.J."/>
        </authorList>
    </citation>
    <scope>NUCLEOTIDE SEQUENCE [GENOMIC DNA]</scope>
    <scope>STRUCTURE BY NMR OF 26-56</scope>
    <source>
        <tissue evidence="6">Leaf</tissue>
    </source>
</reference>
<reference evidence="5" key="2">
    <citation type="journal article" date="1999" name="J. Mol. Biol.">
        <title>High-resolution structure of a potent, cyclic proteinase inhibitor from sunflower seeds.</title>
        <authorList>
            <person name="Luckett S."/>
            <person name="Garcia R.S."/>
            <person name="Barker J.J."/>
            <person name="Konarev A.V."/>
            <person name="Shewry P.R."/>
            <person name="Clarke A.R."/>
            <person name="Brady R.L."/>
        </authorList>
    </citation>
    <scope>PROTEIN SEQUENCE OF 40-53</scope>
    <scope>CROSS-LINK</scope>
    <scope>FUNCTION</scope>
    <scope>MASS SPECTROMETRY</scope>
    <scope>STRUCTURE BY NMR OF 40-53</scope>
    <source>
        <tissue evidence="3">Seed</tissue>
    </source>
</reference>
<reference evidence="5" key="3">
    <citation type="journal article" date="2001" name="J. Mol. Biol.">
        <title>Solution structures by 1H NMR of the novel cyclic trypsin inhibitor SFTI-1 from sunflower seeds and an acyclic permutant.</title>
        <authorList>
            <person name="Korsinczky M.L."/>
            <person name="Schirra H.J."/>
            <person name="Rosengren K.J."/>
            <person name="West J."/>
            <person name="Condie B.A."/>
            <person name="Otvos L."/>
            <person name="Anderson M.A."/>
            <person name="Craik D.J."/>
        </authorList>
    </citation>
    <scope>STRUCTURE BY NMR OF 40-53</scope>
</reference>
<reference key="4">
    <citation type="journal article" date="2003" name="J. Biol. Chem.">
        <title>Enzymatic cyclization of a potent bowman-birk protease inhibitor, sunflower trypsin inhibitor-1, and solution structure of an acyclic precursor peptide.</title>
        <authorList>
            <person name="Marx U.C."/>
            <person name="Korsinczky M.L.J."/>
            <person name="Schirra H.J."/>
            <person name="Jones A."/>
            <person name="Condie B."/>
            <person name="Otvos L. Jr."/>
            <person name="Craik D.J."/>
        </authorList>
    </citation>
    <scope>STRUCTURE BY NMR OF 40-53</scope>
    <scope>DISULFIDE BOND</scope>
</reference>
<proteinExistence type="evidence at protein level"/>
<protein>
    <recommendedName>
        <fullName>Trypsin inhibitor 1</fullName>
    </recommendedName>
    <alternativeName>
        <fullName>SFTI-1</fullName>
    </alternativeName>
</protein>
<accession>Q4GWU5</accession>
<sequence length="56" mass="5971">MATTMAKLITLVVLAILAFVEVSVSGYKTSISTITIEDNGRCTKSIPPICFPDGRP</sequence>
<name>SFTI1_HELAN</name>
<dbReference type="EMBL" id="AM050587">
    <property type="protein sequence ID" value="CAJ19097.1"/>
    <property type="molecule type" value="Genomic_DNA"/>
</dbReference>
<dbReference type="PDB" id="1JBL">
    <property type="method" value="NMR"/>
    <property type="chains" value="A=40-53"/>
</dbReference>
<dbReference type="PDB" id="1JBN">
    <property type="method" value="NMR"/>
    <property type="chains" value="A=40-53"/>
</dbReference>
<dbReference type="PDB" id="1O8Y">
    <property type="method" value="NMR"/>
    <property type="chains" value="A=40-53"/>
</dbReference>
<dbReference type="PDB" id="1O8Z">
    <property type="method" value="NMR"/>
    <property type="chains" value="A=40-53"/>
</dbReference>
<dbReference type="PDB" id="1SFI">
    <property type="method" value="X-ray"/>
    <property type="resolution" value="1.65 A"/>
    <property type="chains" value="I=40-53"/>
</dbReference>
<dbReference type="PDB" id="1T9E">
    <property type="method" value="NMR"/>
    <property type="chains" value="A=40-53"/>
</dbReference>
<dbReference type="PDB" id="2AB9">
    <property type="method" value="NMR"/>
    <property type="chains" value="A=26-56"/>
</dbReference>
<dbReference type="PDB" id="3P8F">
    <property type="method" value="X-ray"/>
    <property type="resolution" value="2.00 A"/>
    <property type="chains" value="I=40-53"/>
</dbReference>
<dbReference type="PDB" id="4ABI">
    <property type="method" value="X-ray"/>
    <property type="resolution" value="1.55 A"/>
    <property type="chains" value="B=40-53"/>
</dbReference>
<dbReference type="PDB" id="4ABJ">
    <property type="method" value="X-ray"/>
    <property type="resolution" value="1.45 A"/>
    <property type="chains" value="B=40-53"/>
</dbReference>
<dbReference type="PDB" id="4HGC">
    <property type="method" value="X-ray"/>
    <property type="resolution" value="1.29 A"/>
    <property type="chains" value="I=40-53"/>
</dbReference>
<dbReference type="PDB" id="4K1E">
    <property type="method" value="X-ray"/>
    <property type="resolution" value="1.30 A"/>
    <property type="chains" value="B=40-53"/>
</dbReference>
<dbReference type="PDB" id="4K8Y">
    <property type="method" value="X-ray"/>
    <property type="resolution" value="1.00 A"/>
    <property type="chains" value="B=40-53"/>
</dbReference>
<dbReference type="PDB" id="4KEL">
    <property type="method" value="X-ray"/>
    <property type="resolution" value="1.15 A"/>
    <property type="chains" value="B=40-53"/>
</dbReference>
<dbReference type="PDB" id="4XOJ">
    <property type="method" value="X-ray"/>
    <property type="resolution" value="0.91 A"/>
    <property type="chains" value="B=40-52"/>
</dbReference>
<dbReference type="PDB" id="6BVH">
    <property type="method" value="X-ray"/>
    <property type="resolution" value="1.93 A"/>
    <property type="chains" value="I=40-53"/>
</dbReference>
<dbReference type="PDB" id="6BVU">
    <property type="method" value="NMR"/>
    <property type="chains" value="A=42-50"/>
</dbReference>
<dbReference type="PDB" id="6BVW">
    <property type="method" value="NMR"/>
    <property type="chains" value="A=42-50"/>
</dbReference>
<dbReference type="PDB" id="6BVX">
    <property type="method" value="NMR"/>
    <property type="chains" value="A=42-55"/>
</dbReference>
<dbReference type="PDB" id="6BVY">
    <property type="method" value="NMR"/>
    <property type="chains" value="A=42-50"/>
</dbReference>
<dbReference type="PDB" id="6D3X">
    <property type="method" value="X-ray"/>
    <property type="resolution" value="1.80 A"/>
    <property type="chains" value="C/D=40-53"/>
</dbReference>
<dbReference type="PDB" id="6D3Y">
    <property type="method" value="X-ray"/>
    <property type="resolution" value="1.32 A"/>
    <property type="chains" value="C=40-53"/>
</dbReference>
<dbReference type="PDB" id="6D3Z">
    <property type="method" value="X-ray"/>
    <property type="resolution" value="2.00 A"/>
    <property type="chains" value="C=40-53"/>
</dbReference>
<dbReference type="PDB" id="6D40">
    <property type="method" value="X-ray"/>
    <property type="resolution" value="1.43 A"/>
    <property type="chains" value="C=40-53"/>
</dbReference>
<dbReference type="PDB" id="6Q1U">
    <property type="method" value="X-ray"/>
    <property type="resolution" value="2.35 A"/>
    <property type="chains" value="C/D=40-53"/>
</dbReference>
<dbReference type="PDB" id="6U22">
    <property type="method" value="X-ray"/>
    <property type="resolution" value="1.42 A"/>
    <property type="chains" value="C=40-53"/>
</dbReference>
<dbReference type="PDB" id="6U24">
    <property type="method" value="NMR"/>
    <property type="chains" value="A=40-53"/>
</dbReference>
<dbReference type="PDB" id="6U7Q">
    <property type="method" value="NMR"/>
    <property type="chains" value="A=40-53"/>
</dbReference>
<dbReference type="PDB" id="6U7R">
    <property type="method" value="NMR"/>
    <property type="chains" value="A=40-53"/>
</dbReference>
<dbReference type="PDB" id="6U7S">
    <property type="method" value="NMR"/>
    <property type="chains" value="A=40-53"/>
</dbReference>
<dbReference type="PDB" id="6U7U">
    <property type="method" value="NMR"/>
    <property type="chains" value="A=40-53"/>
</dbReference>
<dbReference type="PDB" id="6U7X">
    <property type="method" value="NMR"/>
    <property type="chains" value="A=40-53"/>
</dbReference>
<dbReference type="PDB" id="6VXY">
    <property type="method" value="X-ray"/>
    <property type="resolution" value="1.40 A"/>
    <property type="chains" value="C=40-53"/>
</dbReference>
<dbReference type="PDB" id="6VY8">
    <property type="method" value="NMR"/>
    <property type="chains" value="A=40-53"/>
</dbReference>
<dbReference type="PDB" id="7ARX">
    <property type="method" value="X-ray"/>
    <property type="resolution" value="2.42 A"/>
    <property type="chains" value="C=40-53"/>
</dbReference>
<dbReference type="PDBsum" id="1JBL"/>
<dbReference type="PDBsum" id="1JBN"/>
<dbReference type="PDBsum" id="1O8Y"/>
<dbReference type="PDBsum" id="1O8Z"/>
<dbReference type="PDBsum" id="1SFI"/>
<dbReference type="PDBsum" id="1T9E"/>
<dbReference type="PDBsum" id="2AB9"/>
<dbReference type="PDBsum" id="3P8F"/>
<dbReference type="PDBsum" id="4ABI"/>
<dbReference type="PDBsum" id="4ABJ"/>
<dbReference type="PDBsum" id="4HGC"/>
<dbReference type="PDBsum" id="4K1E"/>
<dbReference type="PDBsum" id="4K8Y"/>
<dbReference type="PDBsum" id="4KEL"/>
<dbReference type="PDBsum" id="4XOJ"/>
<dbReference type="PDBsum" id="6BVH"/>
<dbReference type="PDBsum" id="6BVU"/>
<dbReference type="PDBsum" id="6BVW"/>
<dbReference type="PDBsum" id="6BVX"/>
<dbReference type="PDBsum" id="6BVY"/>
<dbReference type="PDBsum" id="6D3X"/>
<dbReference type="PDBsum" id="6D3Y"/>
<dbReference type="PDBsum" id="6D3Z"/>
<dbReference type="PDBsum" id="6D40"/>
<dbReference type="PDBsum" id="6Q1U"/>
<dbReference type="PDBsum" id="6U22"/>
<dbReference type="PDBsum" id="6U24"/>
<dbReference type="PDBsum" id="6U7Q"/>
<dbReference type="PDBsum" id="6U7R"/>
<dbReference type="PDBsum" id="6U7S"/>
<dbReference type="PDBsum" id="6U7U"/>
<dbReference type="PDBsum" id="6U7X"/>
<dbReference type="PDBsum" id="6VXY"/>
<dbReference type="PDBsum" id="6VY8"/>
<dbReference type="PDBsum" id="7ARX"/>
<dbReference type="BMRB" id="Q4GWU5"/>
<dbReference type="SMR" id="Q4GWU5"/>
<dbReference type="MEROPS" id="I12.002"/>
<dbReference type="EvolutionaryTrace" id="Q4GWU5"/>
<dbReference type="GO" id="GO:0004866">
    <property type="term" value="F:endopeptidase inhibitor activity"/>
    <property type="evidence" value="ECO:0000314"/>
    <property type="project" value="CAFA"/>
</dbReference>
<dbReference type="GO" id="GO:0002020">
    <property type="term" value="F:protease binding"/>
    <property type="evidence" value="ECO:0000314"/>
    <property type="project" value="CAFA"/>
</dbReference>
<dbReference type="GO" id="GO:0004867">
    <property type="term" value="F:serine-type endopeptidase inhibitor activity"/>
    <property type="evidence" value="ECO:0000314"/>
    <property type="project" value="UniProtKB"/>
</dbReference>
<dbReference type="GO" id="GO:0010951">
    <property type="term" value="P:negative regulation of endopeptidase activity"/>
    <property type="evidence" value="ECO:0000314"/>
    <property type="project" value="CAFA"/>
</dbReference>
<keyword id="KW-0002">3D-structure</keyword>
<keyword id="KW-0903">Direct protein sequencing</keyword>
<keyword id="KW-1015">Disulfide bond</keyword>
<keyword id="KW-0646">Protease inhibitor</keyword>
<keyword id="KW-0722">Serine protease inhibitor</keyword>
<keyword id="KW-0732">Signal</keyword>
<evidence type="ECO:0000250" key="1">
    <source>
        <dbReference type="UniProtKB" id="P81705"/>
    </source>
</evidence>
<evidence type="ECO:0000255" key="2"/>
<evidence type="ECO:0000269" key="3">
    <source>
    </source>
</evidence>
<evidence type="ECO:0000269" key="4">
    <source>
    </source>
</evidence>
<evidence type="ECO:0000305" key="5"/>
<evidence type="ECO:0000312" key="6">
    <source>
        <dbReference type="EMBL" id="CAJ19097.1"/>
    </source>
</evidence>
<evidence type="ECO:0007829" key="7">
    <source>
        <dbReference type="PDB" id="2AB9"/>
    </source>
</evidence>
<evidence type="ECO:0007829" key="8">
    <source>
        <dbReference type="PDB" id="4XOJ"/>
    </source>
</evidence>
<feature type="signal peptide" evidence="2">
    <location>
        <begin position="1"/>
        <end position="25"/>
    </location>
</feature>
<feature type="propeptide" id="PRO_0000042672" evidence="2 3">
    <location>
        <begin position="26"/>
        <end position="39"/>
    </location>
</feature>
<feature type="peptide" id="PRO_0000042673" description="Trypsin inhibitor 1">
    <location>
        <begin position="40"/>
        <end position="53"/>
    </location>
</feature>
<feature type="propeptide" id="PRO_0000042674">
    <location>
        <begin position="54"/>
        <end position="56"/>
    </location>
</feature>
<feature type="site" description="Reactive bond" evidence="1">
    <location>
        <begin position="44"/>
        <end position="45"/>
    </location>
</feature>
<feature type="disulfide bond" evidence="3 4">
    <location>
        <begin position="42"/>
        <end position="50"/>
    </location>
</feature>
<feature type="cross-link" description="Cyclopeptide (Gly-Asp)">
    <location>
        <begin position="40"/>
        <end position="53"/>
    </location>
</feature>
<feature type="strand" evidence="7">
    <location>
        <begin position="34"/>
        <end position="36"/>
    </location>
</feature>
<feature type="strand" evidence="8">
    <location>
        <begin position="41"/>
        <end position="47"/>
    </location>
</feature>
<feature type="strand" evidence="7">
    <location>
        <begin position="49"/>
        <end position="52"/>
    </location>
</feature>
<comment type="function">
    <text evidence="3">Inhibits trypsin, cathepsin G, elastase, chymotrypsin and thrombin. Does not inhibit factor Xa.</text>
</comment>
<comment type="PTM">
    <text evidence="3">This is a cyclic peptide.</text>
</comment>
<comment type="mass spectrometry" mass="1513.0" method="Electrospray" evidence="3"/>
<organism>
    <name type="scientific">Helianthus annuus</name>
    <name type="common">Common sunflower</name>
    <dbReference type="NCBI Taxonomy" id="4232"/>
    <lineage>
        <taxon>Eukaryota</taxon>
        <taxon>Viridiplantae</taxon>
        <taxon>Streptophyta</taxon>
        <taxon>Embryophyta</taxon>
        <taxon>Tracheophyta</taxon>
        <taxon>Spermatophyta</taxon>
        <taxon>Magnoliopsida</taxon>
        <taxon>eudicotyledons</taxon>
        <taxon>Gunneridae</taxon>
        <taxon>Pentapetalae</taxon>
        <taxon>asterids</taxon>
        <taxon>campanulids</taxon>
        <taxon>Asterales</taxon>
        <taxon>Asteraceae</taxon>
        <taxon>Asteroideae</taxon>
        <taxon>Heliantheae alliance</taxon>
        <taxon>Heliantheae</taxon>
        <taxon>Helianthus</taxon>
    </lineage>
</organism>
<gene>
    <name evidence="6" type="primary">sfti1</name>
</gene>